<sequence length="216" mass="24101">MKIGLFGGSFNPVHLTHLDVANGVLKRLGLDKVLFVPAGNPYHKEQGEMLSAELRYELVKKAVQGCSGLGVSDIDISADGPTYTVDTLREASRRYPDAELYFIMGQDSLETFTTWKGWQSIPELANVVAVSRAEADHGAMSQELKRIFPEVVESGQDVWQMKGGKSIYIIGDFDFVISSTLVREEWKKGRDVSKLVPKAVAECMNEKGDKLKKFWR</sequence>
<reference key="1">
    <citation type="submission" date="2009-06" db="EMBL/GenBank/DDBJ databases">
        <title>Complete sequence of Desulfovibrio salexigens DSM 2638.</title>
        <authorList>
            <consortium name="US DOE Joint Genome Institute"/>
            <person name="Lucas S."/>
            <person name="Copeland A."/>
            <person name="Lapidus A."/>
            <person name="Glavina del Rio T."/>
            <person name="Tice H."/>
            <person name="Bruce D."/>
            <person name="Goodwin L."/>
            <person name="Pitluck S."/>
            <person name="Munk A.C."/>
            <person name="Brettin T."/>
            <person name="Detter J.C."/>
            <person name="Han C."/>
            <person name="Tapia R."/>
            <person name="Larimer F."/>
            <person name="Land M."/>
            <person name="Hauser L."/>
            <person name="Kyrpides N."/>
            <person name="Anderson I."/>
            <person name="Wall J.D."/>
            <person name="Arkin A.P."/>
            <person name="Dehal P."/>
            <person name="Chivian D."/>
            <person name="Giles B."/>
            <person name="Hazen T.C."/>
        </authorList>
    </citation>
    <scope>NUCLEOTIDE SEQUENCE [LARGE SCALE GENOMIC DNA]</scope>
    <source>
        <strain>ATCC 14822 / DSM 2638 / NCIMB 8403 / VKM B-1763</strain>
    </source>
</reference>
<gene>
    <name evidence="1" type="primary">nadD</name>
    <name type="ordered locus">Desal_1536</name>
</gene>
<keyword id="KW-0067">ATP-binding</keyword>
<keyword id="KW-0520">NAD</keyword>
<keyword id="KW-0547">Nucleotide-binding</keyword>
<keyword id="KW-0548">Nucleotidyltransferase</keyword>
<keyword id="KW-0662">Pyridine nucleotide biosynthesis</keyword>
<keyword id="KW-1185">Reference proteome</keyword>
<keyword id="KW-0808">Transferase</keyword>
<protein>
    <recommendedName>
        <fullName evidence="1">Probable nicotinate-nucleotide adenylyltransferase</fullName>
        <ecNumber evidence="1">2.7.7.18</ecNumber>
    </recommendedName>
    <alternativeName>
        <fullName evidence="1">Deamido-NAD(+) diphosphorylase</fullName>
    </alternativeName>
    <alternativeName>
        <fullName evidence="1">Deamido-NAD(+) pyrophosphorylase</fullName>
    </alternativeName>
    <alternativeName>
        <fullName evidence="1">Nicotinate mononucleotide adenylyltransferase</fullName>
        <shortName evidence="1">NaMN adenylyltransferase</shortName>
    </alternativeName>
</protein>
<feature type="chain" id="PRO_1000204483" description="Probable nicotinate-nucleotide adenylyltransferase">
    <location>
        <begin position="1"/>
        <end position="216"/>
    </location>
</feature>
<accession>C6BSC2</accession>
<organism>
    <name type="scientific">Maridesulfovibrio salexigens (strain ATCC 14822 / DSM 2638 / NCIMB 8403 / VKM B-1763)</name>
    <name type="common">Desulfovibrio salexigens</name>
    <dbReference type="NCBI Taxonomy" id="526222"/>
    <lineage>
        <taxon>Bacteria</taxon>
        <taxon>Pseudomonadati</taxon>
        <taxon>Thermodesulfobacteriota</taxon>
        <taxon>Desulfovibrionia</taxon>
        <taxon>Desulfovibrionales</taxon>
        <taxon>Desulfovibrionaceae</taxon>
        <taxon>Maridesulfovibrio</taxon>
    </lineage>
</organism>
<name>NADD_MARSD</name>
<evidence type="ECO:0000255" key="1">
    <source>
        <dbReference type="HAMAP-Rule" id="MF_00244"/>
    </source>
</evidence>
<dbReference type="EC" id="2.7.7.18" evidence="1"/>
<dbReference type="EMBL" id="CP001649">
    <property type="protein sequence ID" value="ACS79598.1"/>
    <property type="molecule type" value="Genomic_DNA"/>
</dbReference>
<dbReference type="RefSeq" id="WP_015851416.1">
    <property type="nucleotide sequence ID" value="NC_012881.1"/>
</dbReference>
<dbReference type="SMR" id="C6BSC2"/>
<dbReference type="STRING" id="526222.Desal_1536"/>
<dbReference type="KEGG" id="dsa:Desal_1536"/>
<dbReference type="eggNOG" id="COG1057">
    <property type="taxonomic scope" value="Bacteria"/>
</dbReference>
<dbReference type="HOGENOM" id="CLU_069765_1_1_7"/>
<dbReference type="OrthoDB" id="5295945at2"/>
<dbReference type="UniPathway" id="UPA00253">
    <property type="reaction ID" value="UER00332"/>
</dbReference>
<dbReference type="Proteomes" id="UP000002601">
    <property type="component" value="Chromosome"/>
</dbReference>
<dbReference type="GO" id="GO:0005524">
    <property type="term" value="F:ATP binding"/>
    <property type="evidence" value="ECO:0007669"/>
    <property type="project" value="UniProtKB-KW"/>
</dbReference>
<dbReference type="GO" id="GO:0004515">
    <property type="term" value="F:nicotinate-nucleotide adenylyltransferase activity"/>
    <property type="evidence" value="ECO:0007669"/>
    <property type="project" value="UniProtKB-UniRule"/>
</dbReference>
<dbReference type="GO" id="GO:0009435">
    <property type="term" value="P:NAD biosynthetic process"/>
    <property type="evidence" value="ECO:0007669"/>
    <property type="project" value="UniProtKB-UniRule"/>
</dbReference>
<dbReference type="CDD" id="cd02165">
    <property type="entry name" value="NMNAT"/>
    <property type="match status" value="1"/>
</dbReference>
<dbReference type="Gene3D" id="3.40.50.620">
    <property type="entry name" value="HUPs"/>
    <property type="match status" value="1"/>
</dbReference>
<dbReference type="HAMAP" id="MF_00244">
    <property type="entry name" value="NaMN_adenylyltr"/>
    <property type="match status" value="1"/>
</dbReference>
<dbReference type="InterPro" id="IPR004821">
    <property type="entry name" value="Cyt_trans-like"/>
</dbReference>
<dbReference type="InterPro" id="IPR005248">
    <property type="entry name" value="NadD/NMNAT"/>
</dbReference>
<dbReference type="InterPro" id="IPR014729">
    <property type="entry name" value="Rossmann-like_a/b/a_fold"/>
</dbReference>
<dbReference type="NCBIfam" id="TIGR00125">
    <property type="entry name" value="cyt_tran_rel"/>
    <property type="match status" value="1"/>
</dbReference>
<dbReference type="NCBIfam" id="TIGR00482">
    <property type="entry name" value="nicotinate (nicotinamide) nucleotide adenylyltransferase"/>
    <property type="match status" value="1"/>
</dbReference>
<dbReference type="NCBIfam" id="NF000840">
    <property type="entry name" value="PRK00071.1-3"/>
    <property type="match status" value="1"/>
</dbReference>
<dbReference type="PANTHER" id="PTHR39321">
    <property type="entry name" value="NICOTINATE-NUCLEOTIDE ADENYLYLTRANSFERASE-RELATED"/>
    <property type="match status" value="1"/>
</dbReference>
<dbReference type="PANTHER" id="PTHR39321:SF3">
    <property type="entry name" value="PHOSPHOPANTETHEINE ADENYLYLTRANSFERASE"/>
    <property type="match status" value="1"/>
</dbReference>
<dbReference type="Pfam" id="PF01467">
    <property type="entry name" value="CTP_transf_like"/>
    <property type="match status" value="1"/>
</dbReference>
<dbReference type="SUPFAM" id="SSF52374">
    <property type="entry name" value="Nucleotidylyl transferase"/>
    <property type="match status" value="1"/>
</dbReference>
<comment type="function">
    <text evidence="1">Catalyzes the reversible adenylation of nicotinate mononucleotide (NaMN) to nicotinic acid adenine dinucleotide (NaAD).</text>
</comment>
<comment type="catalytic activity">
    <reaction evidence="1">
        <text>nicotinate beta-D-ribonucleotide + ATP + H(+) = deamido-NAD(+) + diphosphate</text>
        <dbReference type="Rhea" id="RHEA:22860"/>
        <dbReference type="ChEBI" id="CHEBI:15378"/>
        <dbReference type="ChEBI" id="CHEBI:30616"/>
        <dbReference type="ChEBI" id="CHEBI:33019"/>
        <dbReference type="ChEBI" id="CHEBI:57502"/>
        <dbReference type="ChEBI" id="CHEBI:58437"/>
        <dbReference type="EC" id="2.7.7.18"/>
    </reaction>
</comment>
<comment type="pathway">
    <text evidence="1">Cofactor biosynthesis; NAD(+) biosynthesis; deamido-NAD(+) from nicotinate D-ribonucleotide: step 1/1.</text>
</comment>
<comment type="similarity">
    <text evidence="1">Belongs to the NadD family.</text>
</comment>
<proteinExistence type="inferred from homology"/>